<feature type="chain" id="PRO_0000454377" description="4-hydroxybutyrate dehydrogenase">
    <location>
        <begin position="1"/>
        <end position="382"/>
    </location>
</feature>
<feature type="binding site" evidence="1">
    <location>
        <position position="37"/>
    </location>
    <ligand>
        <name>NAD(+)</name>
        <dbReference type="ChEBI" id="CHEBI:57540"/>
    </ligand>
</feature>
<feature type="binding site" evidence="1">
    <location>
        <position position="67"/>
    </location>
    <ligand>
        <name>NAD(+)</name>
        <dbReference type="ChEBI" id="CHEBI:57540"/>
    </ligand>
</feature>
<feature type="binding site" evidence="1">
    <location>
        <begin position="94"/>
        <end position="98"/>
    </location>
    <ligand>
        <name>NAD(+)</name>
        <dbReference type="ChEBI" id="CHEBI:57540"/>
    </ligand>
</feature>
<feature type="binding site" evidence="1">
    <location>
        <begin position="138"/>
        <end position="142"/>
    </location>
    <ligand>
        <name>NAD(+)</name>
        <dbReference type="ChEBI" id="CHEBI:57540"/>
    </ligand>
</feature>
<feature type="binding site" evidence="1">
    <location>
        <position position="159"/>
    </location>
    <ligand>
        <name>NAD(+)</name>
        <dbReference type="ChEBI" id="CHEBI:57540"/>
    </ligand>
</feature>
<feature type="binding site" evidence="1">
    <location>
        <position position="193"/>
    </location>
    <ligand>
        <name>Fe cation</name>
        <dbReference type="ChEBI" id="CHEBI:24875"/>
    </ligand>
</feature>
<feature type="binding site" evidence="1">
    <location>
        <position position="197"/>
    </location>
    <ligand>
        <name>Fe cation</name>
        <dbReference type="ChEBI" id="CHEBI:24875"/>
    </ligand>
</feature>
<feature type="binding site" evidence="1">
    <location>
        <position position="261"/>
    </location>
    <ligand>
        <name>Fe cation</name>
        <dbReference type="ChEBI" id="CHEBI:24875"/>
    </ligand>
</feature>
<feature type="binding site" evidence="1">
    <location>
        <position position="280"/>
    </location>
    <ligand>
        <name>Fe cation</name>
        <dbReference type="ChEBI" id="CHEBI:24875"/>
    </ligand>
</feature>
<feature type="binding site" evidence="1">
    <location>
        <position position="280"/>
    </location>
    <ligand>
        <name>NAD(+)</name>
        <dbReference type="ChEBI" id="CHEBI:57540"/>
    </ligand>
</feature>
<feature type="mutagenesis site" description="Retains very low activity." evidence="3">
    <original>D</original>
    <variation>A</variation>
    <location>
        <position position="193"/>
    </location>
</feature>
<feature type="mutagenesis site" description="Loss of activity." evidence="3">
    <original>H</original>
    <variation>A</variation>
    <location>
        <position position="197"/>
    </location>
</feature>
<feature type="mutagenesis site" description="Loss of activity." evidence="3">
    <original>H</original>
    <variation>A</variation>
    <location>
        <position position="261"/>
    </location>
</feature>
<feature type="mutagenesis site" description="75% decrease in Vmax. Optimum pH is 9.5." evidence="3">
    <original>H</original>
    <variation>A</variation>
    <location>
        <position position="265"/>
    </location>
</feature>
<feature type="mutagenesis site" description="95% decrease in Vmax. Optimum pH is 8.5." evidence="3">
    <original>H</original>
    <variation>C</variation>
    <location>
        <position position="265"/>
    </location>
</feature>
<feature type="mutagenesis site" description="Retains very low activity." evidence="3">
    <original>H</original>
    <variation>D</variation>
    <location>
        <position position="265"/>
    </location>
</feature>
<feature type="mutagenesis site" description="Loss of activity." evidence="3">
    <original>H</original>
    <variation>Y</variation>
    <location>
        <position position="265"/>
    </location>
</feature>
<feature type="mutagenesis site" description="Retains very low activity." evidence="3">
    <original>H</original>
    <variation>A</variation>
    <location>
        <position position="280"/>
    </location>
</feature>
<sequence>MAFIYYLTHIHLDFGAVSLLKSECERIGIRRPLLVTDKGVVAAGVAQRAIDAMQGLQVAVFDETPSNPTEAMVRKAAAQYREAGCDGLVAVGGGSSIDLAKGIAILATHEGELTTYATIEGGSARITDKAAPLIAVPTTSGTGSEVARGAIIILDDGRKLGFHSWHLLPKSAVCDPELTLGLPAGLTAATGMDAIAHCIETFLAPAFNPPADGIALDGLERGWGHIERATRDGQDRDARLNMMSASMQGAMAFQKGLGCVHSLSHPLGGLKIDGRTGLHHGTLNAVVMPAVLRFNADAPTVVRDDRYARLRRAMHLPDGADIAQAVHDMTVRLGLPTGLRQMGVTEDMFDKVIAGALVDHCHKTNPKEASAADYRRMLEQSM</sequence>
<gene>
    <name evidence="6" type="primary">gbd</name>
    <name evidence="8" type="ORF">I6H87_18265</name>
</gene>
<organism>
    <name type="scientific">Cupriavidus necator</name>
    <name type="common">Alcaligenes eutrophus</name>
    <name type="synonym">Ralstonia eutropha</name>
    <dbReference type="NCBI Taxonomy" id="106590"/>
    <lineage>
        <taxon>Bacteria</taxon>
        <taxon>Pseudomonadati</taxon>
        <taxon>Pseudomonadota</taxon>
        <taxon>Betaproteobacteria</taxon>
        <taxon>Burkholderiales</taxon>
        <taxon>Burkholderiaceae</taxon>
        <taxon>Cupriavidus</taxon>
    </lineage>
</organism>
<name>4HBDH_CUPNE</name>
<protein>
    <recommendedName>
        <fullName evidence="6">4-hydroxybutyrate dehydrogenase</fullName>
        <shortName evidence="2">4HbD</shortName>
        <ecNumber evidence="4">1.1.1.61</ecNumber>
    </recommendedName>
    <alternativeName>
        <fullName evidence="5">Gamma-hydroxybutyrate dehydrogenase</fullName>
        <shortName evidence="5">GHBDH</shortName>
    </alternativeName>
</protein>
<accession>Q59104</accession>
<dbReference type="EC" id="1.1.1.61" evidence="4"/>
<dbReference type="EMBL" id="L36817">
    <property type="protein sequence ID" value="AAC41425.1"/>
    <property type="molecule type" value="Genomic_DNA"/>
</dbReference>
<dbReference type="EMBL" id="CP066018">
    <property type="protein sequence ID" value="QQB76620.1"/>
    <property type="molecule type" value="Genomic_DNA"/>
</dbReference>
<dbReference type="PIR" id="I39568">
    <property type="entry name" value="I39568"/>
</dbReference>
<dbReference type="RefSeq" id="WP_010810019.1">
    <property type="nucleotide sequence ID" value="NZ_LVWN01000023.1"/>
</dbReference>
<dbReference type="SMR" id="Q59104"/>
<dbReference type="BRENDA" id="1.1.1.61">
    <property type="organism ID" value="231"/>
</dbReference>
<dbReference type="GO" id="GO:0047577">
    <property type="term" value="F:4-hydroxybutyrate dehydrogenase activity"/>
    <property type="evidence" value="ECO:0007669"/>
    <property type="project" value="UniProtKB-EC"/>
</dbReference>
<dbReference type="GO" id="GO:0004022">
    <property type="term" value="F:alcohol dehydrogenase (NAD+) activity"/>
    <property type="evidence" value="ECO:0007669"/>
    <property type="project" value="TreeGrafter"/>
</dbReference>
<dbReference type="GO" id="GO:0046872">
    <property type="term" value="F:metal ion binding"/>
    <property type="evidence" value="ECO:0007669"/>
    <property type="project" value="UniProtKB-KW"/>
</dbReference>
<dbReference type="GO" id="GO:0000166">
    <property type="term" value="F:nucleotide binding"/>
    <property type="evidence" value="ECO:0007669"/>
    <property type="project" value="UniProtKB-KW"/>
</dbReference>
<dbReference type="CDD" id="cd14861">
    <property type="entry name" value="Fe-ADH-like"/>
    <property type="match status" value="1"/>
</dbReference>
<dbReference type="FunFam" id="3.40.50.1970:FF:000003">
    <property type="entry name" value="Alcohol dehydrogenase, iron-containing"/>
    <property type="match status" value="1"/>
</dbReference>
<dbReference type="Gene3D" id="3.40.50.1970">
    <property type="match status" value="1"/>
</dbReference>
<dbReference type="Gene3D" id="1.20.1090.10">
    <property type="entry name" value="Dehydroquinate synthase-like - alpha domain"/>
    <property type="match status" value="1"/>
</dbReference>
<dbReference type="InterPro" id="IPR001670">
    <property type="entry name" value="ADH_Fe/GldA"/>
</dbReference>
<dbReference type="InterPro" id="IPR056798">
    <property type="entry name" value="ADH_Fe_C"/>
</dbReference>
<dbReference type="InterPro" id="IPR018211">
    <property type="entry name" value="ADH_Fe_CS"/>
</dbReference>
<dbReference type="InterPro" id="IPR039697">
    <property type="entry name" value="Alcohol_dehydrogenase_Fe"/>
</dbReference>
<dbReference type="PANTHER" id="PTHR11496">
    <property type="entry name" value="ALCOHOL DEHYDROGENASE"/>
    <property type="match status" value="1"/>
</dbReference>
<dbReference type="PANTHER" id="PTHR11496:SF102">
    <property type="entry name" value="ALCOHOL DEHYDROGENASE 4"/>
    <property type="match status" value="1"/>
</dbReference>
<dbReference type="Pfam" id="PF25137">
    <property type="entry name" value="ADH_Fe_C"/>
    <property type="match status" value="1"/>
</dbReference>
<dbReference type="Pfam" id="PF00465">
    <property type="entry name" value="Fe-ADH"/>
    <property type="match status" value="1"/>
</dbReference>
<dbReference type="SUPFAM" id="SSF56796">
    <property type="entry name" value="Dehydroquinate synthase-like"/>
    <property type="match status" value="1"/>
</dbReference>
<dbReference type="PROSITE" id="PS00913">
    <property type="entry name" value="ADH_IRON_1"/>
    <property type="match status" value="1"/>
</dbReference>
<comment type="function">
    <text evidence="3 4">Involved in the degradation of 4-hydroxybutyrate (PubMed:7851418). Catalyzes the interconversion of gamma-hydroxybutyrate (GHB) and succinic semialdehyde (SSA) (PubMed:31981617).</text>
</comment>
<comment type="catalytic activity">
    <reaction evidence="3">
        <text>4-hydroxybutanoate + NAD(+) = succinate semialdehyde + NADH + H(+)</text>
        <dbReference type="Rhea" id="RHEA:23948"/>
        <dbReference type="ChEBI" id="CHEBI:15378"/>
        <dbReference type="ChEBI" id="CHEBI:16724"/>
        <dbReference type="ChEBI" id="CHEBI:57540"/>
        <dbReference type="ChEBI" id="CHEBI:57706"/>
        <dbReference type="ChEBI" id="CHEBI:57945"/>
        <dbReference type="EC" id="1.1.1.61"/>
    </reaction>
</comment>
<comment type="cofactor">
    <cofactor evidence="1">
        <name>Fe cation</name>
        <dbReference type="ChEBI" id="CHEBI:24875"/>
    </cofactor>
</comment>
<comment type="activity regulation">
    <text evidence="3">Shows competitive inhibition of GHBDH activity by the product succinic semialdehyde, and non-competitive inhibitions by the three other substrate-product combinations. The conversion of GHB to SSA is activated by two different saturating purified nudix hydrolases, B.methanolicus activator ACT and E.coli NudF. The nudix hydrolases do not activate the reverse reaction.</text>
</comment>
<comment type="biophysicochemical properties">
    <kinetics>
        <KM evidence="3">0.98 mM for 4-hydroxybutanoate</KM>
        <KM evidence="3">0.064 mM for NAD(+)</KM>
        <text evidence="3">kcat is 8.4 sec(-1) with 4-hydroxybutanoate as substrate. kcat is 8.9 sec(-1) with NAD(+) as substrate.</text>
    </kinetics>
    <phDependence>
        <text evidence="3">Optimum pH is 9.0.</text>
    </phDependence>
</comment>
<comment type="similarity">
    <text evidence="7">Belongs to the iron-containing alcohol dehydrogenase family.</text>
</comment>
<evidence type="ECO:0000250" key="1">
    <source>
        <dbReference type="UniProtKB" id="P0A9S1"/>
    </source>
</evidence>
<evidence type="ECO:0000250" key="2">
    <source>
        <dbReference type="UniProtKB" id="P38945"/>
    </source>
</evidence>
<evidence type="ECO:0000269" key="3">
    <source>
    </source>
</evidence>
<evidence type="ECO:0000269" key="4">
    <source>
    </source>
</evidence>
<evidence type="ECO:0000303" key="5">
    <source>
    </source>
</evidence>
<evidence type="ECO:0000303" key="6">
    <source>
    </source>
</evidence>
<evidence type="ECO:0000305" key="7"/>
<evidence type="ECO:0000312" key="8">
    <source>
        <dbReference type="EMBL" id="QQB76620.1"/>
    </source>
</evidence>
<keyword id="KW-0408">Iron</keyword>
<keyword id="KW-0479">Metal-binding</keyword>
<keyword id="KW-0520">NAD</keyword>
<keyword id="KW-0547">Nucleotide-binding</keyword>
<keyword id="KW-0560">Oxidoreductase</keyword>
<reference key="1">
    <citation type="journal article" date="1995" name="Eur. J. Biochem.">
        <title>Metabolic pathway for biosynthesis of poly(3-hydroxybutyrate-co-4-hydroxybutyrate) from 4-hydroxybutyrate by Alcaligenes eutrophus.</title>
        <authorList>
            <person name="Valentin H.E."/>
            <person name="Zwingmann G."/>
            <person name="Schoenebaum A."/>
            <person name="Steinbuechel A."/>
        </authorList>
    </citation>
    <scope>NUCLEOTIDE SEQUENCE [GENOMIC DNA]</scope>
    <scope>FUNCTION</scope>
    <source>
        <strain>H16 / SK4040</strain>
    </source>
</reference>
<reference key="2">
    <citation type="submission" date="2020-12" db="EMBL/GenBank/DDBJ databases">
        <title>FDA dAtabase for Regulatory Grade micrObial Sequences (FDA-ARGOS): supporting development and validation of infectious disease Dx tests.</title>
        <authorList>
            <person name="Kerrigan L."/>
            <person name="Long C."/>
            <person name="Tallon L."/>
            <person name="Sadzewicz L."/>
            <person name="Zhao X."/>
            <person name="Boylan J."/>
            <person name="Ott S."/>
            <person name="Bowen H."/>
            <person name="Vavikolanu K."/>
            <person name="Mehta A."/>
            <person name="Aluvathingal J."/>
            <person name="Nadendla S."/>
            <person name="Yan Y."/>
            <person name="Sichtig H."/>
        </authorList>
    </citation>
    <scope>NUCLEOTIDE SEQUENCE [LARGE SCALE GENOMIC DNA]</scope>
    <source>
        <strain>337 / ATCC 17699D-5 / FDAARGOS_1030</strain>
    </source>
</reference>
<reference key="3">
    <citation type="journal article" date="2020" name="Biochim. Biophys. Acta">
        <title>Kinetics aspects of gamma-hydroxybutyrate dehydrogenase.</title>
        <authorList>
            <person name="Taxon E.S."/>
            <person name="Halbers L.P."/>
            <person name="Parsons S.M."/>
        </authorList>
    </citation>
    <scope>FUNCTION</scope>
    <scope>CATALYTIC ACTIVITY</scope>
    <scope>ACTIVITY REGULATION</scope>
    <scope>BIOPHYSICOCHEMICAL PROPERTIES</scope>
    <scope>MUTAGENESIS OF ASP-193; HIS-197; HIS-261; HIS-265 AND HIS-280</scope>
</reference>
<proteinExistence type="evidence at protein level"/>